<name>RHG15_CHICK</name>
<sequence>MERSTTSDTASEKPNPSHSTGAVQMRIKNANSHHDRLSQSKSMILSDNVKVLEPINRHRRNHSQHNLTLADIISTPDHTVVEKEGYLLKAKIADGGKKLRKNWSTSWIVLTSRKMEFYKESKQPALANLKPGYKPECVDLCGAHIEWTPEKSSRKNVFQITTVSGNEFLLQSDIDFLILDWFHAIKNAIDRLPKERSCTSRNLEFKLRRSSSTELLNSLDTESKESKPEHRKSLIFRLNYSASDSNDRSRVKSRLKKFISRRPSLKTLQEKGLIKDQIFGSHLHLVCEHENSTVPQFVRQCIKAVERRGLEVDGIYRVSGNLATIQKLRFVVNQEEKLNLDDSQWEDIHVVTGALKMFFRELPEPLFPYCFFEQFVEAIKIQDNATRIKAVKTLVKKLPRPNYDTMKVLFEHLKKIAAKESVNLMSTQSLGIVFGPTLLRPEKETGNMAVHMLYQNQIVELMLSEYSKIFGSEED</sequence>
<proteinExistence type="evidence at transcript level"/>
<reference key="1">
    <citation type="journal article" date="2005" name="Genome Biol.">
        <title>Full-length cDNAs from chicken bursal lymphocytes to facilitate gene function analysis.</title>
        <authorList>
            <person name="Caldwell R.B."/>
            <person name="Kierzek A.M."/>
            <person name="Arakawa H."/>
            <person name="Bezzubov Y."/>
            <person name="Zaim J."/>
            <person name="Fiedler P."/>
            <person name="Kutter S."/>
            <person name="Blagodatski A."/>
            <person name="Kostovska D."/>
            <person name="Koter M."/>
            <person name="Plachy J."/>
            <person name="Carninci P."/>
            <person name="Hayashizaki Y."/>
            <person name="Buerstedde J.-M."/>
        </authorList>
    </citation>
    <scope>NUCLEOTIDE SEQUENCE [LARGE SCALE MRNA]</scope>
    <source>
        <strain>CB</strain>
        <tissue>Bursa of Fabricius</tissue>
    </source>
</reference>
<gene>
    <name type="primary">ARHGAP15</name>
    <name type="ORF">RCJMB04_1j23</name>
</gene>
<feature type="chain" id="PRO_0000317577" description="Rho GTPase-activating protein 15">
    <location>
        <begin position="1"/>
        <end position="475"/>
    </location>
</feature>
<feature type="domain" description="PH" evidence="2">
    <location>
        <begin position="80"/>
        <end position="190"/>
    </location>
</feature>
<feature type="domain" description="Rho-GAP" evidence="3">
    <location>
        <begin position="281"/>
        <end position="470"/>
    </location>
</feature>
<feature type="region of interest" description="Disordered" evidence="4">
    <location>
        <begin position="1"/>
        <end position="22"/>
    </location>
</feature>
<feature type="site" description="Arginine finger; crucial for GTP hydrolysis by stabilizing the transition state" evidence="3">
    <location>
        <position position="317"/>
    </location>
</feature>
<comment type="function">
    <text evidence="1">GTPase activator for the Rho-type GTPases by converting them to an inactive GDP-bound state.</text>
</comment>
<comment type="subcellular location">
    <subcellularLocation>
        <location evidence="1">Cytoplasm</location>
    </subcellularLocation>
    <subcellularLocation>
        <location evidence="1">Membrane</location>
        <topology evidence="1">Peripheral membrane protein</topology>
    </subcellularLocation>
</comment>
<protein>
    <recommendedName>
        <fullName>Rho GTPase-activating protein 15</fullName>
    </recommendedName>
    <alternativeName>
        <fullName>ArhGAP15</fullName>
    </alternativeName>
    <alternativeName>
        <fullName>Rho-type GTPase-activating protein 15</fullName>
    </alternativeName>
</protein>
<dbReference type="EMBL" id="AJ719361">
    <property type="protein sequence ID" value="CAG31020.1"/>
    <property type="molecule type" value="mRNA"/>
</dbReference>
<dbReference type="RefSeq" id="NP_001008476.1">
    <property type="nucleotide sequence ID" value="NM_001008476.2"/>
</dbReference>
<dbReference type="RefSeq" id="XP_025007979.1">
    <property type="nucleotide sequence ID" value="XM_025152211.2"/>
</dbReference>
<dbReference type="RefSeq" id="XP_025007980.1">
    <property type="nucleotide sequence ID" value="XM_025152212.2"/>
</dbReference>
<dbReference type="RefSeq" id="XP_046777459.1">
    <property type="nucleotide sequence ID" value="XM_046921503.1"/>
</dbReference>
<dbReference type="RefSeq" id="XP_046777460.1">
    <property type="nucleotide sequence ID" value="XM_046921504.1"/>
</dbReference>
<dbReference type="SMR" id="Q5ZMM3"/>
<dbReference type="FunCoup" id="Q5ZMM3">
    <property type="interactions" value="135"/>
</dbReference>
<dbReference type="STRING" id="9031.ENSGALP00000054199"/>
<dbReference type="PaxDb" id="9031-ENSGALP00000037032"/>
<dbReference type="Ensembl" id="ENSGALT00010022374.1">
    <property type="protein sequence ID" value="ENSGALP00010012875.1"/>
    <property type="gene ID" value="ENSGALG00010009373.1"/>
</dbReference>
<dbReference type="GeneID" id="424303"/>
<dbReference type="KEGG" id="gga:424303"/>
<dbReference type="CTD" id="55843"/>
<dbReference type="VEuPathDB" id="HostDB:geneid_424303"/>
<dbReference type="eggNOG" id="KOG1450">
    <property type="taxonomic scope" value="Eukaryota"/>
</dbReference>
<dbReference type="eggNOG" id="KOG4269">
    <property type="taxonomic scope" value="Eukaryota"/>
</dbReference>
<dbReference type="GeneTree" id="ENSGT00950000182860"/>
<dbReference type="HOGENOM" id="CLU_015883_1_0_1"/>
<dbReference type="InParanoid" id="Q5ZMM3"/>
<dbReference type="OMA" id="DHNQWED"/>
<dbReference type="OrthoDB" id="79452at2759"/>
<dbReference type="PhylomeDB" id="Q5ZMM3"/>
<dbReference type="TreeFam" id="TF329345"/>
<dbReference type="Reactome" id="R-GGA-9013149">
    <property type="pathway name" value="RAC1 GTPase cycle"/>
</dbReference>
<dbReference type="Reactome" id="R-GGA-9013423">
    <property type="pathway name" value="RAC3 GTPase cycle"/>
</dbReference>
<dbReference type="PRO" id="PR:Q5ZMM3"/>
<dbReference type="Proteomes" id="UP000000539">
    <property type="component" value="Chromosome 7"/>
</dbReference>
<dbReference type="Bgee" id="ENSGALG00000012421">
    <property type="expression patterns" value="Expressed in granulocyte and 10 other cell types or tissues"/>
</dbReference>
<dbReference type="GO" id="GO:0005737">
    <property type="term" value="C:cytoplasm"/>
    <property type="evidence" value="ECO:0000318"/>
    <property type="project" value="GO_Central"/>
</dbReference>
<dbReference type="GO" id="GO:0005886">
    <property type="term" value="C:plasma membrane"/>
    <property type="evidence" value="ECO:0000318"/>
    <property type="project" value="GO_Central"/>
</dbReference>
<dbReference type="GO" id="GO:0005096">
    <property type="term" value="F:GTPase activator activity"/>
    <property type="evidence" value="ECO:0000318"/>
    <property type="project" value="GO_Central"/>
</dbReference>
<dbReference type="GO" id="GO:0007264">
    <property type="term" value="P:small GTPase-mediated signal transduction"/>
    <property type="evidence" value="ECO:0000318"/>
    <property type="project" value="GO_Central"/>
</dbReference>
<dbReference type="CDD" id="cd13233">
    <property type="entry name" value="PH_ARHGAP9-like"/>
    <property type="match status" value="1"/>
</dbReference>
<dbReference type="CDD" id="cd04403">
    <property type="entry name" value="RhoGAP_ARHGAP27_15_12_9"/>
    <property type="match status" value="1"/>
</dbReference>
<dbReference type="FunFam" id="1.10.555.10:FF:000003">
    <property type="entry name" value="Putative rho GTPase-activating protein 12"/>
    <property type="match status" value="1"/>
</dbReference>
<dbReference type="FunFam" id="2.30.29.30:FF:000260">
    <property type="entry name" value="Rho GTPase activating protein 15"/>
    <property type="match status" value="1"/>
</dbReference>
<dbReference type="Gene3D" id="2.30.29.30">
    <property type="entry name" value="Pleckstrin-homology domain (PH domain)/Phosphotyrosine-binding domain (PTB)"/>
    <property type="match status" value="1"/>
</dbReference>
<dbReference type="Gene3D" id="1.10.555.10">
    <property type="entry name" value="Rho GTPase activation protein"/>
    <property type="match status" value="1"/>
</dbReference>
<dbReference type="InterPro" id="IPR011993">
    <property type="entry name" value="PH-like_dom_sf"/>
</dbReference>
<dbReference type="InterPro" id="IPR001849">
    <property type="entry name" value="PH_domain"/>
</dbReference>
<dbReference type="InterPro" id="IPR050729">
    <property type="entry name" value="Rho-GAP"/>
</dbReference>
<dbReference type="InterPro" id="IPR008936">
    <property type="entry name" value="Rho_GTPase_activation_prot"/>
</dbReference>
<dbReference type="InterPro" id="IPR000198">
    <property type="entry name" value="RhoGAP_dom"/>
</dbReference>
<dbReference type="PANTHER" id="PTHR23176:SF108">
    <property type="entry name" value="RHO GTPASE-ACTIVATING PROTEIN 15"/>
    <property type="match status" value="1"/>
</dbReference>
<dbReference type="PANTHER" id="PTHR23176">
    <property type="entry name" value="RHO/RAC/CDC GTPASE-ACTIVATING PROTEIN"/>
    <property type="match status" value="1"/>
</dbReference>
<dbReference type="Pfam" id="PF00169">
    <property type="entry name" value="PH"/>
    <property type="match status" value="1"/>
</dbReference>
<dbReference type="Pfam" id="PF00620">
    <property type="entry name" value="RhoGAP"/>
    <property type="match status" value="1"/>
</dbReference>
<dbReference type="SMART" id="SM00233">
    <property type="entry name" value="PH"/>
    <property type="match status" value="1"/>
</dbReference>
<dbReference type="SMART" id="SM00324">
    <property type="entry name" value="RhoGAP"/>
    <property type="match status" value="1"/>
</dbReference>
<dbReference type="SUPFAM" id="SSF48350">
    <property type="entry name" value="GTPase activation domain, GAP"/>
    <property type="match status" value="1"/>
</dbReference>
<dbReference type="SUPFAM" id="SSF50729">
    <property type="entry name" value="PH domain-like"/>
    <property type="match status" value="1"/>
</dbReference>
<dbReference type="PROSITE" id="PS50003">
    <property type="entry name" value="PH_DOMAIN"/>
    <property type="match status" value="1"/>
</dbReference>
<dbReference type="PROSITE" id="PS50238">
    <property type="entry name" value="RHOGAP"/>
    <property type="match status" value="1"/>
</dbReference>
<organism>
    <name type="scientific">Gallus gallus</name>
    <name type="common">Chicken</name>
    <dbReference type="NCBI Taxonomy" id="9031"/>
    <lineage>
        <taxon>Eukaryota</taxon>
        <taxon>Metazoa</taxon>
        <taxon>Chordata</taxon>
        <taxon>Craniata</taxon>
        <taxon>Vertebrata</taxon>
        <taxon>Euteleostomi</taxon>
        <taxon>Archelosauria</taxon>
        <taxon>Archosauria</taxon>
        <taxon>Dinosauria</taxon>
        <taxon>Saurischia</taxon>
        <taxon>Theropoda</taxon>
        <taxon>Coelurosauria</taxon>
        <taxon>Aves</taxon>
        <taxon>Neognathae</taxon>
        <taxon>Galloanserae</taxon>
        <taxon>Galliformes</taxon>
        <taxon>Phasianidae</taxon>
        <taxon>Phasianinae</taxon>
        <taxon>Gallus</taxon>
    </lineage>
</organism>
<accession>Q5ZMM3</accession>
<keyword id="KW-0963">Cytoplasm</keyword>
<keyword id="KW-0343">GTPase activation</keyword>
<keyword id="KW-0472">Membrane</keyword>
<keyword id="KW-1185">Reference proteome</keyword>
<evidence type="ECO:0000250" key="1"/>
<evidence type="ECO:0000255" key="2">
    <source>
        <dbReference type="PROSITE-ProRule" id="PRU00145"/>
    </source>
</evidence>
<evidence type="ECO:0000255" key="3">
    <source>
        <dbReference type="PROSITE-ProRule" id="PRU00172"/>
    </source>
</evidence>
<evidence type="ECO:0000256" key="4">
    <source>
        <dbReference type="SAM" id="MobiDB-lite"/>
    </source>
</evidence>